<sequence>MSSLDKTMHFDFNQNKGKNVYDTLQDVYNALEEKGYSPINQIVGYLLSGDPAYIPRHNDARNLILKHERDEIIEELVKSYLGKNK</sequence>
<proteinExistence type="inferred from homology"/>
<protein>
    <recommendedName>
        <fullName evidence="1">UPF0297 protein LJ_0475</fullName>
    </recommendedName>
</protein>
<feature type="chain" id="PRO_0000216970" description="UPF0297 protein LJ_0475">
    <location>
        <begin position="1"/>
        <end position="85"/>
    </location>
</feature>
<name>Y475_LACJO</name>
<evidence type="ECO:0000255" key="1">
    <source>
        <dbReference type="HAMAP-Rule" id="MF_01507"/>
    </source>
</evidence>
<gene>
    <name type="ordered locus">LJ_0475</name>
</gene>
<organism>
    <name type="scientific">Lactobacillus johnsonii (strain CNCM I-12250 / La1 / NCC 533)</name>
    <dbReference type="NCBI Taxonomy" id="257314"/>
    <lineage>
        <taxon>Bacteria</taxon>
        <taxon>Bacillati</taxon>
        <taxon>Bacillota</taxon>
        <taxon>Bacilli</taxon>
        <taxon>Lactobacillales</taxon>
        <taxon>Lactobacillaceae</taxon>
        <taxon>Lactobacillus</taxon>
    </lineage>
</organism>
<reference key="1">
    <citation type="journal article" date="2004" name="Proc. Natl. Acad. Sci. U.S.A.">
        <title>The genome sequence of the probiotic intestinal bacterium Lactobacillus johnsonii NCC 533.</title>
        <authorList>
            <person name="Pridmore R.D."/>
            <person name="Berger B."/>
            <person name="Desiere F."/>
            <person name="Vilanova D."/>
            <person name="Barretto C."/>
            <person name="Pittet A.-C."/>
            <person name="Zwahlen M.-C."/>
            <person name="Rouvet M."/>
            <person name="Altermann E."/>
            <person name="Barrangou R."/>
            <person name="Mollet B."/>
            <person name="Mercenier A."/>
            <person name="Klaenhammer T."/>
            <person name="Arigoni F."/>
            <person name="Schell M.A."/>
        </authorList>
    </citation>
    <scope>NUCLEOTIDE SEQUENCE [LARGE SCALE GENOMIC DNA]</scope>
    <source>
        <strain>CNCM I-1225 / La1 / NCC 533</strain>
    </source>
</reference>
<comment type="similarity">
    <text evidence="1">Belongs to the UPF0297 family.</text>
</comment>
<dbReference type="EMBL" id="AE017198">
    <property type="protein sequence ID" value="AAS08467.1"/>
    <property type="molecule type" value="Genomic_DNA"/>
</dbReference>
<dbReference type="RefSeq" id="WP_003647717.1">
    <property type="nucleotide sequence ID" value="NC_005362.1"/>
</dbReference>
<dbReference type="SMR" id="Q74KV2"/>
<dbReference type="KEGG" id="ljo:LJ_0475"/>
<dbReference type="eggNOG" id="COG4472">
    <property type="taxonomic scope" value="Bacteria"/>
</dbReference>
<dbReference type="HOGENOM" id="CLU_162466_0_0_9"/>
<dbReference type="Proteomes" id="UP000000581">
    <property type="component" value="Chromosome"/>
</dbReference>
<dbReference type="HAMAP" id="MF_01507">
    <property type="entry name" value="UPF0297"/>
    <property type="match status" value="1"/>
</dbReference>
<dbReference type="InterPro" id="IPR009309">
    <property type="entry name" value="IreB"/>
</dbReference>
<dbReference type="NCBIfam" id="NF003997">
    <property type="entry name" value="PRK05473.1"/>
    <property type="match status" value="1"/>
</dbReference>
<dbReference type="PANTHER" id="PTHR40067">
    <property type="entry name" value="UPF0297 PROTEIN YRZL"/>
    <property type="match status" value="1"/>
</dbReference>
<dbReference type="PANTHER" id="PTHR40067:SF1">
    <property type="entry name" value="UPF0297 PROTEIN YRZL"/>
    <property type="match status" value="1"/>
</dbReference>
<dbReference type="Pfam" id="PF06135">
    <property type="entry name" value="IreB"/>
    <property type="match status" value="1"/>
</dbReference>
<dbReference type="PIRSF" id="PIRSF037258">
    <property type="entry name" value="DUF965_bac"/>
    <property type="match status" value="1"/>
</dbReference>
<accession>Q74KV2</accession>